<keyword id="KW-0010">Activator</keyword>
<keyword id="KW-0238">DNA-binding</keyword>
<keyword id="KW-0936">Ethylene signaling pathway</keyword>
<keyword id="KW-0539">Nucleus</keyword>
<keyword id="KW-1185">Reference proteome</keyword>
<keyword id="KW-0804">Transcription</keyword>
<keyword id="KW-0805">Transcription regulation</keyword>
<sequence length="236" mass="26044">MAEEYYSLRSERVTQLLVPNSESDSVSDKSKAEQSEKKTKRGRDSGKHPVYRGVRMRNWGKWVSEIREPRKKSRIWLGTFPTPEMAARAHDVAALSIKGTAAILNFPELADSFPRPVSLSPRDIQTAALKAAHMEPTTSFSSSTSSSSSLSSTSSLESLVLVMDLSRTESEELGEIVELPSLGASYDVDSANLGNEFVFYDSVDYCLYPPPWGQSSEDNYGHGISPNFGHGLSWDL</sequence>
<accession>Q9LYD3</accession>
<feature type="chain" id="PRO_0000297921" description="Dehydration-responsive element-binding protein 3">
    <location>
        <begin position="1"/>
        <end position="236"/>
    </location>
</feature>
<feature type="DNA-binding region" description="AP2/ERF" evidence="2">
    <location>
        <begin position="50"/>
        <end position="107"/>
    </location>
</feature>
<feature type="region of interest" description="Disordered" evidence="3">
    <location>
        <begin position="17"/>
        <end position="50"/>
    </location>
</feature>
<feature type="compositionally biased region" description="Basic and acidic residues" evidence="3">
    <location>
        <begin position="26"/>
        <end position="47"/>
    </location>
</feature>
<proteinExistence type="evidence at transcript level"/>
<organism>
    <name type="scientific">Arabidopsis thaliana</name>
    <name type="common">Mouse-ear cress</name>
    <dbReference type="NCBI Taxonomy" id="3702"/>
    <lineage>
        <taxon>Eukaryota</taxon>
        <taxon>Viridiplantae</taxon>
        <taxon>Streptophyta</taxon>
        <taxon>Embryophyta</taxon>
        <taxon>Tracheophyta</taxon>
        <taxon>Spermatophyta</taxon>
        <taxon>Magnoliopsida</taxon>
        <taxon>eudicotyledons</taxon>
        <taxon>Gunneridae</taxon>
        <taxon>Pentapetalae</taxon>
        <taxon>rosids</taxon>
        <taxon>malvids</taxon>
        <taxon>Brassicales</taxon>
        <taxon>Brassicaceae</taxon>
        <taxon>Camelineae</taxon>
        <taxon>Arabidopsis</taxon>
    </lineage>
</organism>
<dbReference type="EMBL" id="AY940160">
    <property type="protein sequence ID" value="AAX38232.1"/>
    <property type="molecule type" value="mRNA"/>
</dbReference>
<dbReference type="EMBL" id="AY560851">
    <property type="protein sequence ID" value="AAT44918.1"/>
    <property type="molecule type" value="mRNA"/>
</dbReference>
<dbReference type="EMBL" id="AL163815">
    <property type="protein sequence ID" value="CAB87719.1"/>
    <property type="molecule type" value="Genomic_DNA"/>
</dbReference>
<dbReference type="EMBL" id="CP002688">
    <property type="protein sequence ID" value="AED91698.1"/>
    <property type="molecule type" value="Genomic_DNA"/>
</dbReference>
<dbReference type="PIR" id="T48518">
    <property type="entry name" value="T48518"/>
</dbReference>
<dbReference type="RefSeq" id="NP_196720.1">
    <property type="nucleotide sequence ID" value="NM_121197.3"/>
</dbReference>
<dbReference type="SMR" id="Q9LYD3"/>
<dbReference type="BioGRID" id="16309">
    <property type="interactions" value="11"/>
</dbReference>
<dbReference type="FunCoup" id="Q9LYD3">
    <property type="interactions" value="24"/>
</dbReference>
<dbReference type="IntAct" id="Q9LYD3">
    <property type="interactions" value="11"/>
</dbReference>
<dbReference type="STRING" id="3702.Q9LYD3"/>
<dbReference type="GlyGen" id="Q9LYD3">
    <property type="glycosylation" value="1 site"/>
</dbReference>
<dbReference type="PaxDb" id="3702-AT5G11590.1"/>
<dbReference type="EnsemblPlants" id="AT5G11590.1">
    <property type="protein sequence ID" value="AT5G11590.1"/>
    <property type="gene ID" value="AT5G11590"/>
</dbReference>
<dbReference type="GeneID" id="831031"/>
<dbReference type="Gramene" id="AT5G11590.1">
    <property type="protein sequence ID" value="AT5G11590.1"/>
    <property type="gene ID" value="AT5G11590"/>
</dbReference>
<dbReference type="KEGG" id="ath:AT5G11590"/>
<dbReference type="Araport" id="AT5G11590"/>
<dbReference type="TAIR" id="AT5G11590">
    <property type="gene designation" value="TINY2"/>
</dbReference>
<dbReference type="eggNOG" id="ENOG502RNX7">
    <property type="taxonomic scope" value="Eukaryota"/>
</dbReference>
<dbReference type="HOGENOM" id="CLU_063331_3_0_1"/>
<dbReference type="InParanoid" id="Q9LYD3"/>
<dbReference type="OMA" id="SYGYNQV"/>
<dbReference type="OrthoDB" id="1932364at2759"/>
<dbReference type="PhylomeDB" id="Q9LYD3"/>
<dbReference type="PRO" id="PR:Q9LYD3"/>
<dbReference type="Proteomes" id="UP000006548">
    <property type="component" value="Chromosome 5"/>
</dbReference>
<dbReference type="ExpressionAtlas" id="Q9LYD3">
    <property type="expression patterns" value="baseline and differential"/>
</dbReference>
<dbReference type="GO" id="GO:0005634">
    <property type="term" value="C:nucleus"/>
    <property type="evidence" value="ECO:0007669"/>
    <property type="project" value="UniProtKB-SubCell"/>
</dbReference>
<dbReference type="GO" id="GO:0003700">
    <property type="term" value="F:DNA-binding transcription factor activity"/>
    <property type="evidence" value="ECO:0000250"/>
    <property type="project" value="TAIR"/>
</dbReference>
<dbReference type="GO" id="GO:0043565">
    <property type="term" value="F:sequence-specific DNA binding"/>
    <property type="evidence" value="ECO:0000314"/>
    <property type="project" value="TAIR"/>
</dbReference>
<dbReference type="GO" id="GO:0009873">
    <property type="term" value="P:ethylene-activated signaling pathway"/>
    <property type="evidence" value="ECO:0007669"/>
    <property type="project" value="UniProtKB-KW"/>
</dbReference>
<dbReference type="GO" id="GO:0045893">
    <property type="term" value="P:positive regulation of DNA-templated transcription"/>
    <property type="evidence" value="ECO:0000314"/>
    <property type="project" value="TAIR"/>
</dbReference>
<dbReference type="CDD" id="cd00018">
    <property type="entry name" value="AP2"/>
    <property type="match status" value="1"/>
</dbReference>
<dbReference type="FunFam" id="3.30.730.10:FF:000001">
    <property type="entry name" value="Ethylene-responsive transcription factor 2"/>
    <property type="match status" value="1"/>
</dbReference>
<dbReference type="Gene3D" id="3.30.730.10">
    <property type="entry name" value="AP2/ERF domain"/>
    <property type="match status" value="1"/>
</dbReference>
<dbReference type="InterPro" id="IPR001471">
    <property type="entry name" value="AP2/ERF_dom"/>
</dbReference>
<dbReference type="InterPro" id="IPR036955">
    <property type="entry name" value="AP2/ERF_dom_sf"/>
</dbReference>
<dbReference type="InterPro" id="IPR051032">
    <property type="entry name" value="AP2/ERF_TF_ERF_subfamily"/>
</dbReference>
<dbReference type="InterPro" id="IPR016177">
    <property type="entry name" value="DNA-bd_dom_sf"/>
</dbReference>
<dbReference type="PANTHER" id="PTHR31985:SF259">
    <property type="entry name" value="DEHYDRATION-RESPONSIVE ELEMENT-BINDING PROTEIN 3"/>
    <property type="match status" value="1"/>
</dbReference>
<dbReference type="PANTHER" id="PTHR31985">
    <property type="entry name" value="ETHYLENE-RESPONSIVE TRANSCRIPTION FACTOR ERF042-RELATED"/>
    <property type="match status" value="1"/>
</dbReference>
<dbReference type="Pfam" id="PF00847">
    <property type="entry name" value="AP2"/>
    <property type="match status" value="1"/>
</dbReference>
<dbReference type="PRINTS" id="PR00367">
    <property type="entry name" value="ETHRSPELEMNT"/>
</dbReference>
<dbReference type="SMART" id="SM00380">
    <property type="entry name" value="AP2"/>
    <property type="match status" value="1"/>
</dbReference>
<dbReference type="SUPFAM" id="SSF54171">
    <property type="entry name" value="DNA-binding domain"/>
    <property type="match status" value="1"/>
</dbReference>
<dbReference type="PROSITE" id="PS51032">
    <property type="entry name" value="AP2_ERF"/>
    <property type="match status" value="1"/>
</dbReference>
<evidence type="ECO:0000250" key="1"/>
<evidence type="ECO:0000255" key="2">
    <source>
        <dbReference type="PROSITE-ProRule" id="PRU00366"/>
    </source>
</evidence>
<evidence type="ECO:0000256" key="3">
    <source>
        <dbReference type="SAM" id="MobiDB-lite"/>
    </source>
</evidence>
<evidence type="ECO:0000305" key="4"/>
<reference key="1">
    <citation type="journal article" date="2005" name="J. Biochem. Mol. Biol.">
        <title>Molecular cloning, phylogenetic analysis, expressional profiling and in vitro studies of TINY2 from Arabidopsis thaliana.</title>
        <authorList>
            <person name="Wei G."/>
            <person name="Pan Y."/>
            <person name="Lei J."/>
            <person name="Zhu Y.X."/>
        </authorList>
    </citation>
    <scope>NUCLEOTIDE SEQUENCE [MRNA]</scope>
</reference>
<reference key="2">
    <citation type="submission" date="2004-02" db="EMBL/GenBank/DDBJ databases">
        <title>Molecular cloning, expression, phylogenetic and functional characterization of the Arabidopsis AP2/EREBP transcription factor family.</title>
        <authorList>
            <person name="Pan Y."/>
            <person name="Gong W."/>
            <person name="Liu D."/>
            <person name="Fu Q."/>
            <person name="Mei W.-Q."/>
            <person name="Song W.-Q."/>
            <person name="Ma L.-G."/>
            <person name="Luo J.-C."/>
            <person name="Deng X.-W."/>
            <person name="Zhu Y.-X."/>
        </authorList>
    </citation>
    <scope>NUCLEOTIDE SEQUENCE [MRNA]</scope>
</reference>
<reference key="3">
    <citation type="journal article" date="2000" name="Nature">
        <title>Sequence and analysis of chromosome 5 of the plant Arabidopsis thaliana.</title>
        <authorList>
            <person name="Tabata S."/>
            <person name="Kaneko T."/>
            <person name="Nakamura Y."/>
            <person name="Kotani H."/>
            <person name="Kato T."/>
            <person name="Asamizu E."/>
            <person name="Miyajima N."/>
            <person name="Sasamoto S."/>
            <person name="Kimura T."/>
            <person name="Hosouchi T."/>
            <person name="Kawashima K."/>
            <person name="Kohara M."/>
            <person name="Matsumoto M."/>
            <person name="Matsuno A."/>
            <person name="Muraki A."/>
            <person name="Nakayama S."/>
            <person name="Nakazaki N."/>
            <person name="Naruo K."/>
            <person name="Okumura S."/>
            <person name="Shinpo S."/>
            <person name="Takeuchi C."/>
            <person name="Wada T."/>
            <person name="Watanabe A."/>
            <person name="Yamada M."/>
            <person name="Yasuda M."/>
            <person name="Sato S."/>
            <person name="de la Bastide M."/>
            <person name="Huang E."/>
            <person name="Spiegel L."/>
            <person name="Gnoj L."/>
            <person name="O'Shaughnessy A."/>
            <person name="Preston R."/>
            <person name="Habermann K."/>
            <person name="Murray J."/>
            <person name="Johnson D."/>
            <person name="Rohlfing T."/>
            <person name="Nelson J."/>
            <person name="Stoneking T."/>
            <person name="Pepin K."/>
            <person name="Spieth J."/>
            <person name="Sekhon M."/>
            <person name="Armstrong J."/>
            <person name="Becker M."/>
            <person name="Belter E."/>
            <person name="Cordum H."/>
            <person name="Cordes M."/>
            <person name="Courtney L."/>
            <person name="Courtney W."/>
            <person name="Dante M."/>
            <person name="Du H."/>
            <person name="Edwards J."/>
            <person name="Fryman J."/>
            <person name="Haakensen B."/>
            <person name="Lamar E."/>
            <person name="Latreille P."/>
            <person name="Leonard S."/>
            <person name="Meyer R."/>
            <person name="Mulvaney E."/>
            <person name="Ozersky P."/>
            <person name="Riley A."/>
            <person name="Strowmatt C."/>
            <person name="Wagner-McPherson C."/>
            <person name="Wollam A."/>
            <person name="Yoakum M."/>
            <person name="Bell M."/>
            <person name="Dedhia N."/>
            <person name="Parnell L."/>
            <person name="Shah R."/>
            <person name="Rodriguez M."/>
            <person name="Hoon See L."/>
            <person name="Vil D."/>
            <person name="Baker J."/>
            <person name="Kirchoff K."/>
            <person name="Toth K."/>
            <person name="King L."/>
            <person name="Bahret A."/>
            <person name="Miller B."/>
            <person name="Marra M.A."/>
            <person name="Martienssen R."/>
            <person name="McCombie W.R."/>
            <person name="Wilson R.K."/>
            <person name="Murphy G."/>
            <person name="Bancroft I."/>
            <person name="Volckaert G."/>
            <person name="Wambutt R."/>
            <person name="Duesterhoeft A."/>
            <person name="Stiekema W."/>
            <person name="Pohl T."/>
            <person name="Entian K.-D."/>
            <person name="Terryn N."/>
            <person name="Hartley N."/>
            <person name="Bent E."/>
            <person name="Johnson S."/>
            <person name="Langham S.-A."/>
            <person name="McCullagh B."/>
            <person name="Robben J."/>
            <person name="Grymonprez B."/>
            <person name="Zimmermann W."/>
            <person name="Ramsperger U."/>
            <person name="Wedler H."/>
            <person name="Balke K."/>
            <person name="Wedler E."/>
            <person name="Peters S."/>
            <person name="van Staveren M."/>
            <person name="Dirkse W."/>
            <person name="Mooijman P."/>
            <person name="Klein Lankhorst R."/>
            <person name="Weitzenegger T."/>
            <person name="Bothe G."/>
            <person name="Rose M."/>
            <person name="Hauf J."/>
            <person name="Berneiser S."/>
            <person name="Hempel S."/>
            <person name="Feldpausch M."/>
            <person name="Lamberth S."/>
            <person name="Villarroel R."/>
            <person name="Gielen J."/>
            <person name="Ardiles W."/>
            <person name="Bents O."/>
            <person name="Lemcke K."/>
            <person name="Kolesov G."/>
            <person name="Mayer K.F.X."/>
            <person name="Rudd S."/>
            <person name="Schoof H."/>
            <person name="Schueller C."/>
            <person name="Zaccaria P."/>
            <person name="Mewes H.-W."/>
            <person name="Bevan M."/>
            <person name="Fransz P.F."/>
        </authorList>
    </citation>
    <scope>NUCLEOTIDE SEQUENCE [LARGE SCALE GENOMIC DNA]</scope>
    <source>
        <strain>cv. Columbia</strain>
    </source>
</reference>
<reference key="4">
    <citation type="journal article" date="2017" name="Plant J.">
        <title>Araport11: a complete reannotation of the Arabidopsis thaliana reference genome.</title>
        <authorList>
            <person name="Cheng C.Y."/>
            <person name="Krishnakumar V."/>
            <person name="Chan A.P."/>
            <person name="Thibaud-Nissen F."/>
            <person name="Schobel S."/>
            <person name="Town C.D."/>
        </authorList>
    </citation>
    <scope>GENOME REANNOTATION</scope>
    <source>
        <strain>cv. Columbia</strain>
    </source>
</reference>
<reference key="5">
    <citation type="journal article" date="2006" name="Plant Physiol.">
        <title>Genome-wide analysis of the ERF gene family in Arabidopsis and rice.</title>
        <authorList>
            <person name="Nakano T."/>
            <person name="Suzuki K."/>
            <person name="Fujimura T."/>
            <person name="Shinshi H."/>
        </authorList>
    </citation>
    <scope>GENE FAMILY</scope>
    <scope>NOMENCLATURE</scope>
</reference>
<protein>
    <recommendedName>
        <fullName>Dehydration-responsive element-binding protein 3</fullName>
    </recommendedName>
    <alternativeName>
        <fullName>Protein TINY 2</fullName>
    </alternativeName>
</protein>
<gene>
    <name type="primary">DREB3</name>
    <name type="synonym">ERF041</name>
    <name type="synonym">TINY2</name>
    <name type="ordered locus">At5g11590</name>
    <name type="ORF">F15N18.180</name>
</gene>
<name>DREB3_ARATH</name>
<comment type="function">
    <text evidence="1">Probably acts as a transcriptional activator. Binds to the GCC-box pathogenesis-related promoter element. May be involved in the regulation of gene expression by stress factors and by components of stress signal transduction pathways (By similarity).</text>
</comment>
<comment type="subcellular location">
    <subcellularLocation>
        <location evidence="4">Nucleus</location>
    </subcellularLocation>
</comment>
<comment type="similarity">
    <text evidence="4">Belongs to the AP2/ERF transcription factor family. ERF subfamily.</text>
</comment>